<comment type="function">
    <text evidence="2">Transfers dimethylallyl groups to AMP as part of the biosynthesis of cytokinin phytohormones like isopentenyl adenine or discadenine which controle spore formation and viability.</text>
</comment>
<comment type="catalytic activity">
    <reaction evidence="1">
        <text>dimethylallyl diphosphate + AMP = N(6)-(dimethylallyl)adenosine 5'-phosphate + diphosphate</text>
        <dbReference type="Rhea" id="RHEA:15285"/>
        <dbReference type="ChEBI" id="CHEBI:33019"/>
        <dbReference type="ChEBI" id="CHEBI:57526"/>
        <dbReference type="ChEBI" id="CHEBI:57623"/>
        <dbReference type="ChEBI" id="CHEBI:456215"/>
        <dbReference type="EC" id="2.5.1.27"/>
    </reaction>
</comment>
<comment type="similarity">
    <text evidence="3">Belongs to the isopentenyl transferase family.</text>
</comment>
<gene>
    <name type="primary">iptA</name>
    <name type="ORF">DDB_G0277215</name>
</gene>
<reference key="1">
    <citation type="journal article" date="2002" name="Nature">
        <title>Sequence and analysis of chromosome 2 of Dictyostelium discoideum.</title>
        <authorList>
            <person name="Gloeckner G."/>
            <person name="Eichinger L."/>
            <person name="Szafranski K."/>
            <person name="Pachebat J.A."/>
            <person name="Bankier A.T."/>
            <person name="Dear P.H."/>
            <person name="Lehmann R."/>
            <person name="Baumgart C."/>
            <person name="Parra G."/>
            <person name="Abril J.F."/>
            <person name="Guigo R."/>
            <person name="Kumpf K."/>
            <person name="Tunggal B."/>
            <person name="Cox E.C."/>
            <person name="Quail M.A."/>
            <person name="Platzer M."/>
            <person name="Rosenthal A."/>
            <person name="Noegel A.A."/>
        </authorList>
    </citation>
    <scope>NUCLEOTIDE SEQUENCE [LARGE SCALE GENOMIC DNA]</scope>
    <source>
        <strain>AX4</strain>
    </source>
</reference>
<reference key="2">
    <citation type="journal article" date="2005" name="Nature">
        <title>The genome of the social amoeba Dictyostelium discoideum.</title>
        <authorList>
            <person name="Eichinger L."/>
            <person name="Pachebat J.A."/>
            <person name="Gloeckner G."/>
            <person name="Rajandream M.A."/>
            <person name="Sucgang R."/>
            <person name="Berriman M."/>
            <person name="Song J."/>
            <person name="Olsen R."/>
            <person name="Szafranski K."/>
            <person name="Xu Q."/>
            <person name="Tunggal B."/>
            <person name="Kummerfeld S."/>
            <person name="Madera M."/>
            <person name="Konfortov B.A."/>
            <person name="Rivero F."/>
            <person name="Bankier A.T."/>
            <person name="Lehmann R."/>
            <person name="Hamlin N."/>
            <person name="Davies R."/>
            <person name="Gaudet P."/>
            <person name="Fey P."/>
            <person name="Pilcher K."/>
            <person name="Chen G."/>
            <person name="Saunders D."/>
            <person name="Sodergren E.J."/>
            <person name="Davis P."/>
            <person name="Kerhornou A."/>
            <person name="Nie X."/>
            <person name="Hall N."/>
            <person name="Anjard C."/>
            <person name="Hemphill L."/>
            <person name="Bason N."/>
            <person name="Farbrother P."/>
            <person name="Desany B."/>
            <person name="Just E."/>
            <person name="Morio T."/>
            <person name="Rost R."/>
            <person name="Churcher C.M."/>
            <person name="Cooper J."/>
            <person name="Haydock S."/>
            <person name="van Driessche N."/>
            <person name="Cronin A."/>
            <person name="Goodhead I."/>
            <person name="Muzny D.M."/>
            <person name="Mourier T."/>
            <person name="Pain A."/>
            <person name="Lu M."/>
            <person name="Harper D."/>
            <person name="Lindsay R."/>
            <person name="Hauser H."/>
            <person name="James K.D."/>
            <person name="Quiles M."/>
            <person name="Madan Babu M."/>
            <person name="Saito T."/>
            <person name="Buchrieser C."/>
            <person name="Wardroper A."/>
            <person name="Felder M."/>
            <person name="Thangavelu M."/>
            <person name="Johnson D."/>
            <person name="Knights A."/>
            <person name="Loulseged H."/>
            <person name="Mungall K.L."/>
            <person name="Oliver K."/>
            <person name="Price C."/>
            <person name="Quail M.A."/>
            <person name="Urushihara H."/>
            <person name="Hernandez J."/>
            <person name="Rabbinowitsch E."/>
            <person name="Steffen D."/>
            <person name="Sanders M."/>
            <person name="Ma J."/>
            <person name="Kohara Y."/>
            <person name="Sharp S."/>
            <person name="Simmonds M.N."/>
            <person name="Spiegler S."/>
            <person name="Tivey A."/>
            <person name="Sugano S."/>
            <person name="White B."/>
            <person name="Walker D."/>
            <person name="Woodward J.R."/>
            <person name="Winckler T."/>
            <person name="Tanaka Y."/>
            <person name="Shaulsky G."/>
            <person name="Schleicher M."/>
            <person name="Weinstock G.M."/>
            <person name="Rosenthal A."/>
            <person name="Cox E.C."/>
            <person name="Chisholm R.L."/>
            <person name="Gibbs R.A."/>
            <person name="Loomis W.F."/>
            <person name="Platzer M."/>
            <person name="Kay R.R."/>
            <person name="Williams J.G."/>
            <person name="Dear P.H."/>
            <person name="Noegel A.A."/>
            <person name="Barrell B.G."/>
            <person name="Kuspa A."/>
        </authorList>
    </citation>
    <scope>NUCLEOTIDE SEQUENCE [LARGE SCALE GENOMIC DNA]</scope>
    <source>
        <strain>AX4</strain>
    </source>
</reference>
<reference key="3">
    <citation type="journal article" date="1978" name="Nature">
        <title>5'-AMP is a direct precursor of cytokinin in Dictyostelium discoideum.</title>
        <authorList>
            <person name="Taya Y."/>
            <person name="Tanaka Y."/>
            <person name="Nishimura S."/>
        </authorList>
    </citation>
    <scope>CATALYTIC ACTIVITY</scope>
</reference>
<reference key="4">
    <citation type="journal article" date="2008" name="Development">
        <title>Cytokinins induce sporulation in Dictyostelium.</title>
        <authorList>
            <person name="Anjard C."/>
            <person name="Loomis W.F."/>
        </authorList>
    </citation>
    <scope>FUNCTION</scope>
</reference>
<feature type="chain" id="PRO_0000365733" description="Adenylate dimethylallyltransferase">
    <location>
        <begin position="1"/>
        <end position="283"/>
    </location>
</feature>
<name>IPT_DICDI</name>
<organism>
    <name type="scientific">Dictyostelium discoideum</name>
    <name type="common">Social amoeba</name>
    <dbReference type="NCBI Taxonomy" id="44689"/>
    <lineage>
        <taxon>Eukaryota</taxon>
        <taxon>Amoebozoa</taxon>
        <taxon>Evosea</taxon>
        <taxon>Eumycetozoa</taxon>
        <taxon>Dictyostelia</taxon>
        <taxon>Dictyosteliales</taxon>
        <taxon>Dictyosteliaceae</taxon>
        <taxon>Dictyostelium</taxon>
    </lineage>
</organism>
<keyword id="KW-0203">Cytokinin biosynthesis</keyword>
<keyword id="KW-1185">Reference proteome</keyword>
<keyword id="KW-0749">Sporulation</keyword>
<keyword id="KW-0808">Transferase</keyword>
<accession>Q86K86</accession>
<accession>Q550C3</accession>
<proteinExistence type="evidence at protein level"/>
<sequence length="283" mass="32393">MKILLIIGSTGVGKTDLSINYSKKYNAPVVVLDRIQCFPELSITSGRPDESEYFGSKRIYLTDLLVEPGNENIKKTFYVNKLINILNEIKNNYDTQNLPNEKGYGCIFEGGSISLLKELLTKINKLPYKITCVIYIRPSDSIDNHKLYKAKIFKRVSQMLFPTEEGNDSQILEVKRILNKGKTVNAQGEINLEYYEKIKQVLISLVGLVGIEDVIHFLDKQYDQKNITSKLDPNYLNEIQSQLIETITLAHYNYALSQIELIDSLIKQLPKSIEYCLKNIEIN</sequence>
<protein>
    <recommendedName>
        <fullName>Adenylate dimethylallyltransferase</fullName>
        <ecNumber>2.5.1.27</ecNumber>
    </recommendedName>
    <alternativeName>
        <fullName>Isopentenyl transferase</fullName>
    </alternativeName>
</protein>
<dbReference type="EC" id="2.5.1.27"/>
<dbReference type="EMBL" id="AAFI02000019">
    <property type="protein sequence ID" value="EAL68793.1"/>
    <property type="molecule type" value="Genomic_DNA"/>
</dbReference>
<dbReference type="RefSeq" id="XP_642693.1">
    <property type="nucleotide sequence ID" value="XM_637601.1"/>
</dbReference>
<dbReference type="SMR" id="Q86K86"/>
<dbReference type="STRING" id="44689.Q86K86"/>
<dbReference type="PaxDb" id="44689-DDB0233672"/>
<dbReference type="EnsemblProtists" id="EAL68793">
    <property type="protein sequence ID" value="EAL68793"/>
    <property type="gene ID" value="DDB_G0277215"/>
</dbReference>
<dbReference type="GeneID" id="8620883"/>
<dbReference type="KEGG" id="ddi:DDB_G0277215"/>
<dbReference type="dictyBase" id="DDB_G0277215">
    <property type="gene designation" value="iptA"/>
</dbReference>
<dbReference type="VEuPathDB" id="AmoebaDB:DDB_G0277215"/>
<dbReference type="eggNOG" id="ENOG502RHQV">
    <property type="taxonomic scope" value="Eukaryota"/>
</dbReference>
<dbReference type="HOGENOM" id="CLU_984925_0_0_1"/>
<dbReference type="InParanoid" id="Q86K86"/>
<dbReference type="OMA" id="NITMGHY"/>
<dbReference type="PRO" id="PR:Q86K86"/>
<dbReference type="Proteomes" id="UP000002195">
    <property type="component" value="Chromosome 2"/>
</dbReference>
<dbReference type="GO" id="GO:0009824">
    <property type="term" value="F:AMP dimethylallyltransferase activity"/>
    <property type="evidence" value="ECO:0000315"/>
    <property type="project" value="dictyBase"/>
</dbReference>
<dbReference type="GO" id="GO:0009691">
    <property type="term" value="P:cytokinin biosynthetic process"/>
    <property type="evidence" value="ECO:0000314"/>
    <property type="project" value="dictyBase"/>
</dbReference>
<dbReference type="GO" id="GO:0030435">
    <property type="term" value="P:sporulation resulting in formation of a cellular spore"/>
    <property type="evidence" value="ECO:0000314"/>
    <property type="project" value="dictyBase"/>
</dbReference>
<dbReference type="Gene3D" id="3.40.50.300">
    <property type="entry name" value="P-loop containing nucleotide triphosphate hydrolases"/>
    <property type="match status" value="1"/>
</dbReference>
<dbReference type="InterPro" id="IPR027417">
    <property type="entry name" value="P-loop_NTPase"/>
</dbReference>
<dbReference type="InterPro" id="IPR002648">
    <property type="entry name" value="Tzs"/>
</dbReference>
<dbReference type="Pfam" id="PF01745">
    <property type="entry name" value="IPT"/>
    <property type="match status" value="1"/>
</dbReference>
<dbReference type="PIRSF" id="PIRSF000507">
    <property type="entry name" value="IPT"/>
    <property type="match status" value="1"/>
</dbReference>
<dbReference type="SUPFAM" id="SSF52540">
    <property type="entry name" value="P-loop containing nucleoside triphosphate hydrolases"/>
    <property type="match status" value="1"/>
</dbReference>
<evidence type="ECO:0000269" key="1">
    <source>
    </source>
</evidence>
<evidence type="ECO:0000269" key="2">
    <source>
    </source>
</evidence>
<evidence type="ECO:0000305" key="3"/>